<evidence type="ECO:0000255" key="1">
    <source>
        <dbReference type="HAMAP-Rule" id="MF_00104"/>
    </source>
</evidence>
<reference key="1">
    <citation type="journal article" date="2011" name="J. Bacteriol.">
        <title>Genome sequence of lineage III Listeria monocytogenes strain HCC23.</title>
        <authorList>
            <person name="Steele C.L."/>
            <person name="Donaldson J.R."/>
            <person name="Paul D."/>
            <person name="Banes M.M."/>
            <person name="Arick T."/>
            <person name="Bridges S.M."/>
            <person name="Lawrence M.L."/>
        </authorList>
    </citation>
    <scope>NUCLEOTIDE SEQUENCE [LARGE SCALE GENOMIC DNA]</scope>
    <source>
        <strain>HCC23</strain>
    </source>
</reference>
<sequence length="229" mass="25906">MNQWEELQESVGFDFKDVELLKQAFTHSSYVNEHRRENVKDNERLEFLGDAVLELTVSDYLFNKYPDMAEGHMTKMRAAIVCEPSLVEFAEAVHFSKYVRLGKGEEKAGGRTRPALLADVFESFIGALYLDNGIDKVVTFLERVIFPKIDAGAYLQTVDYKTQLQEIVQRDRDVLIEYDILGETGPAHNKAFDAQVIVNGQVLGKGSGRTKKQAEQSAAQFAINQLTHR</sequence>
<keyword id="KW-0963">Cytoplasm</keyword>
<keyword id="KW-0255">Endonuclease</keyword>
<keyword id="KW-0378">Hydrolase</keyword>
<keyword id="KW-0460">Magnesium</keyword>
<keyword id="KW-0479">Metal-binding</keyword>
<keyword id="KW-0507">mRNA processing</keyword>
<keyword id="KW-0540">Nuclease</keyword>
<keyword id="KW-0694">RNA-binding</keyword>
<keyword id="KW-0698">rRNA processing</keyword>
<keyword id="KW-0699">rRNA-binding</keyword>
<keyword id="KW-0819">tRNA processing</keyword>
<gene>
    <name evidence="1" type="primary">rnc</name>
    <name type="ordered locus">LMHCC_0753</name>
</gene>
<organism>
    <name type="scientific">Listeria monocytogenes serotype 4a (strain HCC23)</name>
    <dbReference type="NCBI Taxonomy" id="552536"/>
    <lineage>
        <taxon>Bacteria</taxon>
        <taxon>Bacillati</taxon>
        <taxon>Bacillota</taxon>
        <taxon>Bacilli</taxon>
        <taxon>Bacillales</taxon>
        <taxon>Listeriaceae</taxon>
        <taxon>Listeria</taxon>
    </lineage>
</organism>
<protein>
    <recommendedName>
        <fullName evidence="1">Ribonuclease 3</fullName>
        <ecNumber evidence="1">3.1.26.3</ecNumber>
    </recommendedName>
    <alternativeName>
        <fullName evidence="1">Ribonuclease III</fullName>
        <shortName evidence="1">RNase III</shortName>
    </alternativeName>
</protein>
<dbReference type="EC" id="3.1.26.3" evidence="1"/>
<dbReference type="EMBL" id="CP001175">
    <property type="protein sequence ID" value="ACK39107.1"/>
    <property type="molecule type" value="Genomic_DNA"/>
</dbReference>
<dbReference type="RefSeq" id="WP_003723865.1">
    <property type="nucleotide sequence ID" value="NC_011660.1"/>
</dbReference>
<dbReference type="SMR" id="B8DDU8"/>
<dbReference type="KEGG" id="lmh:LMHCC_0753"/>
<dbReference type="HOGENOM" id="CLU_000907_1_3_9"/>
<dbReference type="GO" id="GO:0005737">
    <property type="term" value="C:cytoplasm"/>
    <property type="evidence" value="ECO:0007669"/>
    <property type="project" value="UniProtKB-SubCell"/>
</dbReference>
<dbReference type="GO" id="GO:0003725">
    <property type="term" value="F:double-stranded RNA binding"/>
    <property type="evidence" value="ECO:0007669"/>
    <property type="project" value="TreeGrafter"/>
</dbReference>
<dbReference type="GO" id="GO:0046872">
    <property type="term" value="F:metal ion binding"/>
    <property type="evidence" value="ECO:0007669"/>
    <property type="project" value="UniProtKB-KW"/>
</dbReference>
<dbReference type="GO" id="GO:0004525">
    <property type="term" value="F:ribonuclease III activity"/>
    <property type="evidence" value="ECO:0007669"/>
    <property type="project" value="UniProtKB-UniRule"/>
</dbReference>
<dbReference type="GO" id="GO:0019843">
    <property type="term" value="F:rRNA binding"/>
    <property type="evidence" value="ECO:0007669"/>
    <property type="project" value="UniProtKB-KW"/>
</dbReference>
<dbReference type="GO" id="GO:0006397">
    <property type="term" value="P:mRNA processing"/>
    <property type="evidence" value="ECO:0007669"/>
    <property type="project" value="UniProtKB-UniRule"/>
</dbReference>
<dbReference type="GO" id="GO:0010468">
    <property type="term" value="P:regulation of gene expression"/>
    <property type="evidence" value="ECO:0007669"/>
    <property type="project" value="TreeGrafter"/>
</dbReference>
<dbReference type="GO" id="GO:0006364">
    <property type="term" value="P:rRNA processing"/>
    <property type="evidence" value="ECO:0007669"/>
    <property type="project" value="UniProtKB-UniRule"/>
</dbReference>
<dbReference type="GO" id="GO:0008033">
    <property type="term" value="P:tRNA processing"/>
    <property type="evidence" value="ECO:0007669"/>
    <property type="project" value="UniProtKB-KW"/>
</dbReference>
<dbReference type="CDD" id="cd10845">
    <property type="entry name" value="DSRM_RNAse_III_family"/>
    <property type="match status" value="1"/>
</dbReference>
<dbReference type="CDD" id="cd00593">
    <property type="entry name" value="RIBOc"/>
    <property type="match status" value="1"/>
</dbReference>
<dbReference type="FunFam" id="1.10.1520.10:FF:000001">
    <property type="entry name" value="Ribonuclease 3"/>
    <property type="match status" value="1"/>
</dbReference>
<dbReference type="FunFam" id="3.30.160.20:FF:000003">
    <property type="entry name" value="Ribonuclease 3"/>
    <property type="match status" value="1"/>
</dbReference>
<dbReference type="Gene3D" id="3.30.160.20">
    <property type="match status" value="1"/>
</dbReference>
<dbReference type="Gene3D" id="1.10.1520.10">
    <property type="entry name" value="Ribonuclease III domain"/>
    <property type="match status" value="1"/>
</dbReference>
<dbReference type="HAMAP" id="MF_00104">
    <property type="entry name" value="RNase_III"/>
    <property type="match status" value="1"/>
</dbReference>
<dbReference type="InterPro" id="IPR014720">
    <property type="entry name" value="dsRBD_dom"/>
</dbReference>
<dbReference type="InterPro" id="IPR011907">
    <property type="entry name" value="RNase_III"/>
</dbReference>
<dbReference type="InterPro" id="IPR000999">
    <property type="entry name" value="RNase_III_dom"/>
</dbReference>
<dbReference type="InterPro" id="IPR036389">
    <property type="entry name" value="RNase_III_sf"/>
</dbReference>
<dbReference type="NCBIfam" id="TIGR02191">
    <property type="entry name" value="RNaseIII"/>
    <property type="match status" value="1"/>
</dbReference>
<dbReference type="PANTHER" id="PTHR11207:SF0">
    <property type="entry name" value="RIBONUCLEASE 3"/>
    <property type="match status" value="1"/>
</dbReference>
<dbReference type="PANTHER" id="PTHR11207">
    <property type="entry name" value="RIBONUCLEASE III"/>
    <property type="match status" value="1"/>
</dbReference>
<dbReference type="Pfam" id="PF00035">
    <property type="entry name" value="dsrm"/>
    <property type="match status" value="1"/>
</dbReference>
<dbReference type="Pfam" id="PF14622">
    <property type="entry name" value="Ribonucleas_3_3"/>
    <property type="match status" value="1"/>
</dbReference>
<dbReference type="SMART" id="SM00358">
    <property type="entry name" value="DSRM"/>
    <property type="match status" value="1"/>
</dbReference>
<dbReference type="SMART" id="SM00535">
    <property type="entry name" value="RIBOc"/>
    <property type="match status" value="1"/>
</dbReference>
<dbReference type="SUPFAM" id="SSF54768">
    <property type="entry name" value="dsRNA-binding domain-like"/>
    <property type="match status" value="1"/>
</dbReference>
<dbReference type="SUPFAM" id="SSF69065">
    <property type="entry name" value="RNase III domain-like"/>
    <property type="match status" value="1"/>
</dbReference>
<dbReference type="PROSITE" id="PS50137">
    <property type="entry name" value="DS_RBD"/>
    <property type="match status" value="1"/>
</dbReference>
<dbReference type="PROSITE" id="PS00517">
    <property type="entry name" value="RNASE_3_1"/>
    <property type="match status" value="1"/>
</dbReference>
<dbReference type="PROSITE" id="PS50142">
    <property type="entry name" value="RNASE_3_2"/>
    <property type="match status" value="1"/>
</dbReference>
<proteinExistence type="inferred from homology"/>
<name>RNC_LISMH</name>
<feature type="chain" id="PRO_1000118926" description="Ribonuclease 3">
    <location>
        <begin position="1"/>
        <end position="229"/>
    </location>
</feature>
<feature type="domain" description="RNase III" evidence="1">
    <location>
        <begin position="4"/>
        <end position="133"/>
    </location>
</feature>
<feature type="domain" description="DRBM" evidence="1">
    <location>
        <begin position="159"/>
        <end position="228"/>
    </location>
</feature>
<feature type="active site" evidence="1">
    <location>
        <position position="50"/>
    </location>
</feature>
<feature type="active site" evidence="1">
    <location>
        <position position="122"/>
    </location>
</feature>
<feature type="binding site" evidence="1">
    <location>
        <position position="46"/>
    </location>
    <ligand>
        <name>Mg(2+)</name>
        <dbReference type="ChEBI" id="CHEBI:18420"/>
    </ligand>
</feature>
<feature type="binding site" evidence="1">
    <location>
        <position position="119"/>
    </location>
    <ligand>
        <name>Mg(2+)</name>
        <dbReference type="ChEBI" id="CHEBI:18420"/>
    </ligand>
</feature>
<feature type="binding site" evidence="1">
    <location>
        <position position="122"/>
    </location>
    <ligand>
        <name>Mg(2+)</name>
        <dbReference type="ChEBI" id="CHEBI:18420"/>
    </ligand>
</feature>
<accession>B8DDU8</accession>
<comment type="function">
    <text evidence="1">Digests double-stranded RNA. Involved in the processing of primary rRNA transcript to yield the immediate precursors to the large and small rRNAs (23S and 16S). Processes some mRNAs, and tRNAs when they are encoded in the rRNA operon. Processes pre-crRNA and tracrRNA of type II CRISPR loci if present in the organism.</text>
</comment>
<comment type="catalytic activity">
    <reaction evidence="1">
        <text>Endonucleolytic cleavage to 5'-phosphomonoester.</text>
        <dbReference type="EC" id="3.1.26.3"/>
    </reaction>
</comment>
<comment type="cofactor">
    <cofactor evidence="1">
        <name>Mg(2+)</name>
        <dbReference type="ChEBI" id="CHEBI:18420"/>
    </cofactor>
</comment>
<comment type="subunit">
    <text evidence="1">Homodimer.</text>
</comment>
<comment type="subcellular location">
    <subcellularLocation>
        <location evidence="1">Cytoplasm</location>
    </subcellularLocation>
</comment>
<comment type="similarity">
    <text evidence="1">Belongs to the ribonuclease III family.</text>
</comment>